<gene>
    <name evidence="1" type="primary">hisE</name>
    <name type="ordered locus">Mnod_7528</name>
</gene>
<protein>
    <recommendedName>
        <fullName evidence="1">Phosphoribosyl-ATP pyrophosphatase</fullName>
        <shortName evidence="1">PRA-PH</shortName>
        <ecNumber evidence="1">3.6.1.31</ecNumber>
    </recommendedName>
</protein>
<comment type="catalytic activity">
    <reaction evidence="1">
        <text>1-(5-phospho-beta-D-ribosyl)-ATP + H2O = 1-(5-phospho-beta-D-ribosyl)-5'-AMP + diphosphate + H(+)</text>
        <dbReference type="Rhea" id="RHEA:22828"/>
        <dbReference type="ChEBI" id="CHEBI:15377"/>
        <dbReference type="ChEBI" id="CHEBI:15378"/>
        <dbReference type="ChEBI" id="CHEBI:33019"/>
        <dbReference type="ChEBI" id="CHEBI:59457"/>
        <dbReference type="ChEBI" id="CHEBI:73183"/>
        <dbReference type="EC" id="3.6.1.31"/>
    </reaction>
</comment>
<comment type="pathway">
    <text evidence="1">Amino-acid biosynthesis; L-histidine biosynthesis; L-histidine from 5-phospho-alpha-D-ribose 1-diphosphate: step 2/9.</text>
</comment>
<comment type="subcellular location">
    <subcellularLocation>
        <location evidence="1">Cytoplasm</location>
    </subcellularLocation>
</comment>
<comment type="similarity">
    <text evidence="1">Belongs to the PRA-PH family.</text>
</comment>
<feature type="chain" id="PRO_1000149054" description="Phosphoribosyl-ATP pyrophosphatase">
    <location>
        <begin position="1"/>
        <end position="107"/>
    </location>
</feature>
<name>HIS2_METNO</name>
<evidence type="ECO:0000255" key="1">
    <source>
        <dbReference type="HAMAP-Rule" id="MF_01020"/>
    </source>
</evidence>
<sequence>MTTFTLADLDRIVRSRAAASPEESYTAKLIAAGPGKPAKKLGEEAVEAAIAAVQGDRTSLVSEAADVLYHLLVVLAGGGIPLEEVMAELERRTTQSGLAEKAARRRP</sequence>
<accession>B8IPH2</accession>
<dbReference type="EC" id="3.6.1.31" evidence="1"/>
<dbReference type="EMBL" id="CP001349">
    <property type="protein sequence ID" value="ACL62264.1"/>
    <property type="molecule type" value="Genomic_DNA"/>
</dbReference>
<dbReference type="RefSeq" id="WP_015933818.1">
    <property type="nucleotide sequence ID" value="NC_011894.1"/>
</dbReference>
<dbReference type="SMR" id="B8IPH2"/>
<dbReference type="STRING" id="460265.Mnod_7528"/>
<dbReference type="KEGG" id="mno:Mnod_7528"/>
<dbReference type="eggNOG" id="COG0140">
    <property type="taxonomic scope" value="Bacteria"/>
</dbReference>
<dbReference type="HOGENOM" id="CLU_123337_1_1_5"/>
<dbReference type="OrthoDB" id="9814738at2"/>
<dbReference type="UniPathway" id="UPA00031">
    <property type="reaction ID" value="UER00007"/>
</dbReference>
<dbReference type="Proteomes" id="UP000008207">
    <property type="component" value="Chromosome"/>
</dbReference>
<dbReference type="GO" id="GO:0005737">
    <property type="term" value="C:cytoplasm"/>
    <property type="evidence" value="ECO:0007669"/>
    <property type="project" value="UniProtKB-SubCell"/>
</dbReference>
<dbReference type="GO" id="GO:0005524">
    <property type="term" value="F:ATP binding"/>
    <property type="evidence" value="ECO:0007669"/>
    <property type="project" value="UniProtKB-KW"/>
</dbReference>
<dbReference type="GO" id="GO:0004636">
    <property type="term" value="F:phosphoribosyl-ATP diphosphatase activity"/>
    <property type="evidence" value="ECO:0007669"/>
    <property type="project" value="UniProtKB-UniRule"/>
</dbReference>
<dbReference type="GO" id="GO:0000105">
    <property type="term" value="P:L-histidine biosynthetic process"/>
    <property type="evidence" value="ECO:0007669"/>
    <property type="project" value="UniProtKB-UniRule"/>
</dbReference>
<dbReference type="CDD" id="cd11534">
    <property type="entry name" value="NTP-PPase_HisIE_like"/>
    <property type="match status" value="1"/>
</dbReference>
<dbReference type="Gene3D" id="1.10.287.1080">
    <property type="entry name" value="MazG-like"/>
    <property type="match status" value="1"/>
</dbReference>
<dbReference type="HAMAP" id="MF_01020">
    <property type="entry name" value="HisE"/>
    <property type="match status" value="1"/>
</dbReference>
<dbReference type="InterPro" id="IPR008179">
    <property type="entry name" value="HisE"/>
</dbReference>
<dbReference type="InterPro" id="IPR021130">
    <property type="entry name" value="PRib-ATP_PPHydrolase-like"/>
</dbReference>
<dbReference type="NCBIfam" id="TIGR03188">
    <property type="entry name" value="histidine_hisI"/>
    <property type="match status" value="1"/>
</dbReference>
<dbReference type="NCBIfam" id="NF001613">
    <property type="entry name" value="PRK00400.1-5"/>
    <property type="match status" value="1"/>
</dbReference>
<dbReference type="PANTHER" id="PTHR42945">
    <property type="entry name" value="HISTIDINE BIOSYNTHESIS BIFUNCTIONAL PROTEIN"/>
    <property type="match status" value="1"/>
</dbReference>
<dbReference type="PANTHER" id="PTHR42945:SF1">
    <property type="entry name" value="HISTIDINE BIOSYNTHESIS BIFUNCTIONAL PROTEIN HIS7"/>
    <property type="match status" value="1"/>
</dbReference>
<dbReference type="Pfam" id="PF01503">
    <property type="entry name" value="PRA-PH"/>
    <property type="match status" value="1"/>
</dbReference>
<dbReference type="SUPFAM" id="SSF101386">
    <property type="entry name" value="all-alpha NTP pyrophosphatases"/>
    <property type="match status" value="1"/>
</dbReference>
<keyword id="KW-0028">Amino-acid biosynthesis</keyword>
<keyword id="KW-0067">ATP-binding</keyword>
<keyword id="KW-0963">Cytoplasm</keyword>
<keyword id="KW-0368">Histidine biosynthesis</keyword>
<keyword id="KW-0378">Hydrolase</keyword>
<keyword id="KW-0547">Nucleotide-binding</keyword>
<keyword id="KW-1185">Reference proteome</keyword>
<reference key="1">
    <citation type="submission" date="2009-01" db="EMBL/GenBank/DDBJ databases">
        <title>Complete sequence of chromosome of Methylobacterium nodulans ORS 2060.</title>
        <authorList>
            <consortium name="US DOE Joint Genome Institute"/>
            <person name="Lucas S."/>
            <person name="Copeland A."/>
            <person name="Lapidus A."/>
            <person name="Glavina del Rio T."/>
            <person name="Dalin E."/>
            <person name="Tice H."/>
            <person name="Bruce D."/>
            <person name="Goodwin L."/>
            <person name="Pitluck S."/>
            <person name="Sims D."/>
            <person name="Brettin T."/>
            <person name="Detter J.C."/>
            <person name="Han C."/>
            <person name="Larimer F."/>
            <person name="Land M."/>
            <person name="Hauser L."/>
            <person name="Kyrpides N."/>
            <person name="Ivanova N."/>
            <person name="Marx C.J."/>
            <person name="Richardson P."/>
        </authorList>
    </citation>
    <scope>NUCLEOTIDE SEQUENCE [LARGE SCALE GENOMIC DNA]</scope>
    <source>
        <strain>LMG 21967 / CNCM I-2342 / ORS 2060</strain>
    </source>
</reference>
<organism>
    <name type="scientific">Methylobacterium nodulans (strain LMG 21967 / CNCM I-2342 / ORS 2060)</name>
    <dbReference type="NCBI Taxonomy" id="460265"/>
    <lineage>
        <taxon>Bacteria</taxon>
        <taxon>Pseudomonadati</taxon>
        <taxon>Pseudomonadota</taxon>
        <taxon>Alphaproteobacteria</taxon>
        <taxon>Hyphomicrobiales</taxon>
        <taxon>Methylobacteriaceae</taxon>
        <taxon>Methylobacterium</taxon>
    </lineage>
</organism>
<proteinExistence type="inferred from homology"/>